<organism>
    <name type="scientific">Burkholderia pseudomallei (strain 1710b)</name>
    <dbReference type="NCBI Taxonomy" id="320372"/>
    <lineage>
        <taxon>Bacteria</taxon>
        <taxon>Pseudomonadati</taxon>
        <taxon>Pseudomonadota</taxon>
        <taxon>Betaproteobacteria</taxon>
        <taxon>Burkholderiales</taxon>
        <taxon>Burkholderiaceae</taxon>
        <taxon>Burkholderia</taxon>
        <taxon>pseudomallei group</taxon>
    </lineage>
</organism>
<dbReference type="EC" id="3.5.4.16" evidence="1"/>
<dbReference type="EMBL" id="CP000125">
    <property type="protein sequence ID" value="ABA52207.1"/>
    <property type="molecule type" value="Genomic_DNA"/>
</dbReference>
<dbReference type="SMR" id="Q3JKA4"/>
<dbReference type="EnsemblBacteria" id="ABA52207">
    <property type="protein sequence ID" value="ABA52207"/>
    <property type="gene ID" value="BURPS1710b_A0841"/>
</dbReference>
<dbReference type="KEGG" id="bpm:BURPS1710b_A0841"/>
<dbReference type="HOGENOM" id="CLU_062816_1_1_4"/>
<dbReference type="UniPathway" id="UPA00848">
    <property type="reaction ID" value="UER00151"/>
</dbReference>
<dbReference type="Proteomes" id="UP000002700">
    <property type="component" value="Chromosome II"/>
</dbReference>
<dbReference type="GO" id="GO:0003934">
    <property type="term" value="F:GTP cyclohydrolase I activity"/>
    <property type="evidence" value="ECO:0007669"/>
    <property type="project" value="UniProtKB-UniRule"/>
</dbReference>
<dbReference type="GO" id="GO:0046654">
    <property type="term" value="P:tetrahydrofolate biosynthetic process"/>
    <property type="evidence" value="ECO:0007669"/>
    <property type="project" value="UniProtKB-UniRule"/>
</dbReference>
<dbReference type="Gene3D" id="3.10.270.10">
    <property type="entry name" value="Urate Oxidase"/>
    <property type="match status" value="1"/>
</dbReference>
<dbReference type="HAMAP" id="MF_01527_B">
    <property type="entry name" value="GTP_cyclohydrol_B"/>
    <property type="match status" value="1"/>
</dbReference>
<dbReference type="InterPro" id="IPR022838">
    <property type="entry name" value="GTP_cyclohydrolase_FolE2"/>
</dbReference>
<dbReference type="InterPro" id="IPR003801">
    <property type="entry name" value="GTP_cyclohydrolase_FolE2/MptA"/>
</dbReference>
<dbReference type="NCBIfam" id="NF010200">
    <property type="entry name" value="PRK13674.1-1"/>
    <property type="match status" value="1"/>
</dbReference>
<dbReference type="PANTHER" id="PTHR36445">
    <property type="entry name" value="GTP CYCLOHYDROLASE MPTA"/>
    <property type="match status" value="1"/>
</dbReference>
<dbReference type="PANTHER" id="PTHR36445:SF1">
    <property type="entry name" value="GTP CYCLOHYDROLASE MPTA"/>
    <property type="match status" value="1"/>
</dbReference>
<dbReference type="Pfam" id="PF02649">
    <property type="entry name" value="GCHY-1"/>
    <property type="match status" value="1"/>
</dbReference>
<accession>Q3JKA4</accession>
<proteinExistence type="inferred from homology"/>
<gene>
    <name evidence="1" type="primary">folE2</name>
    <name type="ordered locus">BURPS1710b_A0841</name>
</gene>
<comment type="function">
    <text evidence="1">Converts GTP to 7,8-dihydroneopterin triphosphate.</text>
</comment>
<comment type="catalytic activity">
    <reaction evidence="1">
        <text>GTP + H2O = 7,8-dihydroneopterin 3'-triphosphate + formate + H(+)</text>
        <dbReference type="Rhea" id="RHEA:17473"/>
        <dbReference type="ChEBI" id="CHEBI:15377"/>
        <dbReference type="ChEBI" id="CHEBI:15378"/>
        <dbReference type="ChEBI" id="CHEBI:15740"/>
        <dbReference type="ChEBI" id="CHEBI:37565"/>
        <dbReference type="ChEBI" id="CHEBI:58462"/>
        <dbReference type="EC" id="3.5.4.16"/>
    </reaction>
</comment>
<comment type="pathway">
    <text evidence="1">Cofactor biosynthesis; 7,8-dihydroneopterin triphosphate biosynthesis; 7,8-dihydroneopterin triphosphate from GTP: step 1/1.</text>
</comment>
<comment type="similarity">
    <text evidence="1">Belongs to the GTP cyclohydrolase IV family.</text>
</comment>
<protein>
    <recommendedName>
        <fullName evidence="1">GTP cyclohydrolase FolE2</fullName>
        <ecNumber evidence="1">3.5.4.16</ecNumber>
    </recommendedName>
</protein>
<name>GCH4_BURP1</name>
<feature type="chain" id="PRO_0000289480" description="GTP cyclohydrolase FolE2">
    <location>
        <begin position="1"/>
        <end position="266"/>
    </location>
</feature>
<feature type="site" description="May be catalytically important" evidence="1">
    <location>
        <position position="151"/>
    </location>
</feature>
<evidence type="ECO:0000255" key="1">
    <source>
        <dbReference type="HAMAP-Rule" id="MF_01527"/>
    </source>
</evidence>
<reference key="1">
    <citation type="journal article" date="2010" name="Genome Biol. Evol.">
        <title>Continuing evolution of Burkholderia mallei through genome reduction and large-scale rearrangements.</title>
        <authorList>
            <person name="Losada L."/>
            <person name="Ronning C.M."/>
            <person name="DeShazer D."/>
            <person name="Woods D."/>
            <person name="Fedorova N."/>
            <person name="Kim H.S."/>
            <person name="Shabalina S.A."/>
            <person name="Pearson T.R."/>
            <person name="Brinkac L."/>
            <person name="Tan P."/>
            <person name="Nandi T."/>
            <person name="Crabtree J."/>
            <person name="Badger J."/>
            <person name="Beckstrom-Sternberg S."/>
            <person name="Saqib M."/>
            <person name="Schutzer S.E."/>
            <person name="Keim P."/>
            <person name="Nierman W.C."/>
        </authorList>
    </citation>
    <scope>NUCLEOTIDE SEQUENCE [LARGE SCALE GENOMIC DNA]</scope>
    <source>
        <strain>1710b</strain>
    </source>
</reference>
<sequence length="266" mass="29830">MNPEFAMPDVQSTVDTRQMPIQRVGVRAVRHPLTVRTAEGETQATVGTWNLDVHLPADQKGTHMSRFVALLEERGGPLTADAFRTMLATMLEKLEARAGRIEVSFPYFVNKTAPVSGVRSLLDYEVTLTGDVRDGLTRVFAKVLVPVTSLCPCSKKISQYGAHNQRSHVTIDAELAADVPVEDLIRIAEEEASCELWGLLKRPDEKFVTERAYENPKFVEDLVRDVARRLDADERIVAYVLEAENFESIHNHSAYALIERDKRRGA</sequence>
<keyword id="KW-0378">Hydrolase</keyword>